<accession>A5VTK6</accession>
<feature type="chain" id="PRO_1000013725" description="tRNA uridine(34) hydroxylase">
    <location>
        <begin position="1"/>
        <end position="305"/>
    </location>
</feature>
<feature type="domain" description="Rhodanese" evidence="1">
    <location>
        <begin position="125"/>
        <end position="219"/>
    </location>
</feature>
<feature type="active site" description="Cysteine persulfide intermediate" evidence="1">
    <location>
        <position position="179"/>
    </location>
</feature>
<gene>
    <name evidence="1" type="primary">trhO</name>
    <name type="ordered locus">BOV_A0081</name>
</gene>
<dbReference type="EC" id="1.14.-.-" evidence="1"/>
<dbReference type="EMBL" id="CP000709">
    <property type="protein sequence ID" value="ABQ62769.1"/>
    <property type="molecule type" value="Genomic_DNA"/>
</dbReference>
<dbReference type="RefSeq" id="WP_004687555.1">
    <property type="nucleotide sequence ID" value="NC_009504.1"/>
</dbReference>
<dbReference type="SMR" id="A5VTK6"/>
<dbReference type="KEGG" id="bov:BOV_A0081"/>
<dbReference type="HOGENOM" id="CLU_038878_0_0_5"/>
<dbReference type="PhylomeDB" id="A5VTK6"/>
<dbReference type="Proteomes" id="UP000006383">
    <property type="component" value="Chromosome II"/>
</dbReference>
<dbReference type="GO" id="GO:0016705">
    <property type="term" value="F:oxidoreductase activity, acting on paired donors, with incorporation or reduction of molecular oxygen"/>
    <property type="evidence" value="ECO:0007669"/>
    <property type="project" value="UniProtKB-UniRule"/>
</dbReference>
<dbReference type="GO" id="GO:0006400">
    <property type="term" value="P:tRNA modification"/>
    <property type="evidence" value="ECO:0007669"/>
    <property type="project" value="UniProtKB-UniRule"/>
</dbReference>
<dbReference type="CDD" id="cd01518">
    <property type="entry name" value="RHOD_YceA"/>
    <property type="match status" value="1"/>
</dbReference>
<dbReference type="Gene3D" id="3.30.70.100">
    <property type="match status" value="1"/>
</dbReference>
<dbReference type="Gene3D" id="3.40.250.10">
    <property type="entry name" value="Rhodanese-like domain"/>
    <property type="match status" value="1"/>
</dbReference>
<dbReference type="HAMAP" id="MF_00469">
    <property type="entry name" value="TrhO"/>
    <property type="match status" value="1"/>
</dbReference>
<dbReference type="InterPro" id="IPR001763">
    <property type="entry name" value="Rhodanese-like_dom"/>
</dbReference>
<dbReference type="InterPro" id="IPR036873">
    <property type="entry name" value="Rhodanese-like_dom_sf"/>
</dbReference>
<dbReference type="InterPro" id="IPR020936">
    <property type="entry name" value="TrhO"/>
</dbReference>
<dbReference type="InterPro" id="IPR040503">
    <property type="entry name" value="TRHO_N"/>
</dbReference>
<dbReference type="NCBIfam" id="NF001136">
    <property type="entry name" value="PRK00142.1-4"/>
    <property type="match status" value="1"/>
</dbReference>
<dbReference type="PANTHER" id="PTHR43268:SF3">
    <property type="entry name" value="RHODANESE-LIKE DOMAIN-CONTAINING PROTEIN 7-RELATED"/>
    <property type="match status" value="1"/>
</dbReference>
<dbReference type="PANTHER" id="PTHR43268">
    <property type="entry name" value="THIOSULFATE SULFURTRANSFERASE/RHODANESE-LIKE DOMAIN-CONTAINING PROTEIN 2"/>
    <property type="match status" value="1"/>
</dbReference>
<dbReference type="Pfam" id="PF00581">
    <property type="entry name" value="Rhodanese"/>
    <property type="match status" value="1"/>
</dbReference>
<dbReference type="Pfam" id="PF17773">
    <property type="entry name" value="UPF0176_N"/>
    <property type="match status" value="1"/>
</dbReference>
<dbReference type="SMART" id="SM00450">
    <property type="entry name" value="RHOD"/>
    <property type="match status" value="1"/>
</dbReference>
<dbReference type="SUPFAM" id="SSF52821">
    <property type="entry name" value="Rhodanese/Cell cycle control phosphatase"/>
    <property type="match status" value="1"/>
</dbReference>
<dbReference type="PROSITE" id="PS50206">
    <property type="entry name" value="RHODANESE_3"/>
    <property type="match status" value="1"/>
</dbReference>
<organism>
    <name type="scientific">Brucella ovis (strain ATCC 25840 / 63/290 / NCTC 10512)</name>
    <dbReference type="NCBI Taxonomy" id="444178"/>
    <lineage>
        <taxon>Bacteria</taxon>
        <taxon>Pseudomonadati</taxon>
        <taxon>Pseudomonadota</taxon>
        <taxon>Alphaproteobacteria</taxon>
        <taxon>Hyphomicrobiales</taxon>
        <taxon>Brucellaceae</taxon>
        <taxon>Brucella/Ochrobactrum group</taxon>
        <taxon>Brucella</taxon>
    </lineage>
</organism>
<sequence length="305" mass="33870">MSNLPFTVAALYCFAPLPQYESLREPLAQLCCANGIKGTLLLAAEGINGTVAGSAGAIEKLIAHITAIPGLGEPELKYSHASEMPFHRMKVRLKREIVTMGVEGIDPLKSVGTYIAPKDWNALIADENTVVVDTRNDYEYAIGTFEGAIDPQTRTFREFPEWVKQNRDRLEGKKIAMFCTGGIRCEKATAFVKGLGFDDVYHLKGGILKYLEEVPREQSMWNGECFVFDERVAVGHGLAESDVELCRACRRPLTPQDKLSQFFEEGVSCAGCYAERTPEDRARYAERQKQVKLAEKRGANKHIGS</sequence>
<proteinExistence type="inferred from homology"/>
<evidence type="ECO:0000255" key="1">
    <source>
        <dbReference type="HAMAP-Rule" id="MF_00469"/>
    </source>
</evidence>
<reference key="1">
    <citation type="journal article" date="2009" name="PLoS ONE">
        <title>Genome degradation in Brucella ovis corresponds with narrowing of its host range and tissue tropism.</title>
        <authorList>
            <person name="Tsolis R.M."/>
            <person name="Seshadri R."/>
            <person name="Santos R.L."/>
            <person name="Sangari F.J."/>
            <person name="Lobo J.M."/>
            <person name="de Jong M.F."/>
            <person name="Ren Q."/>
            <person name="Myers G."/>
            <person name="Brinkac L.M."/>
            <person name="Nelson W.C."/>
            <person name="Deboy R.T."/>
            <person name="Angiuoli S."/>
            <person name="Khouri H."/>
            <person name="Dimitrov G."/>
            <person name="Robinson J.R."/>
            <person name="Mulligan S."/>
            <person name="Walker R.L."/>
            <person name="Elzer P.E."/>
            <person name="Hassan K.A."/>
            <person name="Paulsen I.T."/>
        </authorList>
    </citation>
    <scope>NUCLEOTIDE SEQUENCE [LARGE SCALE GENOMIC DNA]</scope>
    <source>
        <strain>ATCC 25840 / 63/290 / NCTC 10512</strain>
    </source>
</reference>
<protein>
    <recommendedName>
        <fullName evidence="1">tRNA uridine(34) hydroxylase</fullName>
        <ecNumber evidence="1">1.14.-.-</ecNumber>
    </recommendedName>
    <alternativeName>
        <fullName evidence="1">tRNA hydroxylation protein O</fullName>
    </alternativeName>
</protein>
<name>TRHO_BRUO2</name>
<keyword id="KW-0560">Oxidoreductase</keyword>
<keyword id="KW-0819">tRNA processing</keyword>
<comment type="function">
    <text evidence="1">Catalyzes oxygen-dependent 5-hydroxyuridine (ho5U) modification at position 34 in tRNAs.</text>
</comment>
<comment type="catalytic activity">
    <reaction evidence="1">
        <text>uridine(34) in tRNA + AH2 + O2 = 5-hydroxyuridine(34) in tRNA + A + H2O</text>
        <dbReference type="Rhea" id="RHEA:64224"/>
        <dbReference type="Rhea" id="RHEA-COMP:11727"/>
        <dbReference type="Rhea" id="RHEA-COMP:13381"/>
        <dbReference type="ChEBI" id="CHEBI:13193"/>
        <dbReference type="ChEBI" id="CHEBI:15377"/>
        <dbReference type="ChEBI" id="CHEBI:15379"/>
        <dbReference type="ChEBI" id="CHEBI:17499"/>
        <dbReference type="ChEBI" id="CHEBI:65315"/>
        <dbReference type="ChEBI" id="CHEBI:136877"/>
    </reaction>
</comment>
<comment type="similarity">
    <text evidence="1">Belongs to the TrhO family.</text>
</comment>